<accession>C4LBN3</accession>
<protein>
    <recommendedName>
        <fullName evidence="1">Probable transcriptional regulatory protein Tola_2714</fullName>
    </recommendedName>
</protein>
<sequence length="247" mass="26145">MAGHSKWANIKHRKAAQDAKRGKMFTKMIREITTAARLGGPDGGSNPRLRAAVAAALSINMTRDTVDRAIKRGAGGDDGVELETLVYEGYGPSGTAVMVECMTDNRNRTVAGVRHAFSKSGGALGTDGSVAYLFTKKGILSFTSADEDALMEAALEAGADDVETNDDGSIDVYTSPNDFGTVLDALEAAGFKPDNANVSMIPSTEVDLNADDAPKLLRLIDMLEDLDDVQEVYHNGTISDEVAATLE</sequence>
<feature type="chain" id="PRO_1000212622" description="Probable transcriptional regulatory protein Tola_2714">
    <location>
        <begin position="1"/>
        <end position="247"/>
    </location>
</feature>
<feature type="region of interest" description="Disordered" evidence="2">
    <location>
        <begin position="1"/>
        <end position="21"/>
    </location>
</feature>
<name>Y2714_TOLAT</name>
<dbReference type="EMBL" id="CP001616">
    <property type="protein sequence ID" value="ACQ94307.1"/>
    <property type="molecule type" value="Genomic_DNA"/>
</dbReference>
<dbReference type="RefSeq" id="WP_015879756.1">
    <property type="nucleotide sequence ID" value="NC_012691.1"/>
</dbReference>
<dbReference type="SMR" id="C4LBN3"/>
<dbReference type="STRING" id="595494.Tola_2714"/>
<dbReference type="KEGG" id="tau:Tola_2714"/>
<dbReference type="eggNOG" id="COG0217">
    <property type="taxonomic scope" value="Bacteria"/>
</dbReference>
<dbReference type="HOGENOM" id="CLU_062974_2_2_6"/>
<dbReference type="OrthoDB" id="9781053at2"/>
<dbReference type="Proteomes" id="UP000009073">
    <property type="component" value="Chromosome"/>
</dbReference>
<dbReference type="GO" id="GO:0005829">
    <property type="term" value="C:cytosol"/>
    <property type="evidence" value="ECO:0007669"/>
    <property type="project" value="TreeGrafter"/>
</dbReference>
<dbReference type="GO" id="GO:0003677">
    <property type="term" value="F:DNA binding"/>
    <property type="evidence" value="ECO:0007669"/>
    <property type="project" value="UniProtKB-UniRule"/>
</dbReference>
<dbReference type="GO" id="GO:0006355">
    <property type="term" value="P:regulation of DNA-templated transcription"/>
    <property type="evidence" value="ECO:0007669"/>
    <property type="project" value="UniProtKB-UniRule"/>
</dbReference>
<dbReference type="FunFam" id="1.10.10.200:FF:000001">
    <property type="entry name" value="Probable transcriptional regulatory protein YebC"/>
    <property type="match status" value="1"/>
</dbReference>
<dbReference type="FunFam" id="3.30.70.980:FF:000002">
    <property type="entry name" value="Probable transcriptional regulatory protein YebC"/>
    <property type="match status" value="1"/>
</dbReference>
<dbReference type="Gene3D" id="1.10.10.200">
    <property type="match status" value="1"/>
</dbReference>
<dbReference type="Gene3D" id="3.30.70.980">
    <property type="match status" value="2"/>
</dbReference>
<dbReference type="HAMAP" id="MF_00693">
    <property type="entry name" value="Transcrip_reg_TACO1"/>
    <property type="match status" value="1"/>
</dbReference>
<dbReference type="InterPro" id="IPR017856">
    <property type="entry name" value="Integrase-like_N"/>
</dbReference>
<dbReference type="InterPro" id="IPR048300">
    <property type="entry name" value="TACO1_YebC-like_2nd/3rd_dom"/>
</dbReference>
<dbReference type="InterPro" id="IPR049083">
    <property type="entry name" value="TACO1_YebC_N"/>
</dbReference>
<dbReference type="InterPro" id="IPR002876">
    <property type="entry name" value="Transcrip_reg_TACO1-like"/>
</dbReference>
<dbReference type="InterPro" id="IPR026564">
    <property type="entry name" value="Transcrip_reg_TACO1-like_dom3"/>
</dbReference>
<dbReference type="InterPro" id="IPR029072">
    <property type="entry name" value="YebC-like"/>
</dbReference>
<dbReference type="NCBIfam" id="NF001030">
    <property type="entry name" value="PRK00110.1"/>
    <property type="match status" value="1"/>
</dbReference>
<dbReference type="NCBIfam" id="NF009044">
    <property type="entry name" value="PRK12378.1"/>
    <property type="match status" value="1"/>
</dbReference>
<dbReference type="NCBIfam" id="TIGR01033">
    <property type="entry name" value="YebC/PmpR family DNA-binding transcriptional regulator"/>
    <property type="match status" value="1"/>
</dbReference>
<dbReference type="PANTHER" id="PTHR12532:SF6">
    <property type="entry name" value="TRANSCRIPTIONAL REGULATORY PROTEIN YEBC-RELATED"/>
    <property type="match status" value="1"/>
</dbReference>
<dbReference type="PANTHER" id="PTHR12532">
    <property type="entry name" value="TRANSLATIONAL ACTIVATOR OF CYTOCHROME C OXIDASE 1"/>
    <property type="match status" value="1"/>
</dbReference>
<dbReference type="Pfam" id="PF20772">
    <property type="entry name" value="TACO1_YebC_N"/>
    <property type="match status" value="1"/>
</dbReference>
<dbReference type="Pfam" id="PF01709">
    <property type="entry name" value="Transcrip_reg"/>
    <property type="match status" value="1"/>
</dbReference>
<dbReference type="SUPFAM" id="SSF75625">
    <property type="entry name" value="YebC-like"/>
    <property type="match status" value="1"/>
</dbReference>
<organism>
    <name type="scientific">Tolumonas auensis (strain DSM 9187 / NBRC 110442 / TA 4)</name>
    <dbReference type="NCBI Taxonomy" id="595494"/>
    <lineage>
        <taxon>Bacteria</taxon>
        <taxon>Pseudomonadati</taxon>
        <taxon>Pseudomonadota</taxon>
        <taxon>Gammaproteobacteria</taxon>
        <taxon>Aeromonadales</taxon>
        <taxon>Aeromonadaceae</taxon>
        <taxon>Tolumonas</taxon>
    </lineage>
</organism>
<gene>
    <name type="ordered locus">Tola_2714</name>
</gene>
<proteinExistence type="inferred from homology"/>
<reference key="1">
    <citation type="submission" date="2009-05" db="EMBL/GenBank/DDBJ databases">
        <title>Complete sequence of Tolumonas auensis DSM 9187.</title>
        <authorList>
            <consortium name="US DOE Joint Genome Institute"/>
            <person name="Lucas S."/>
            <person name="Copeland A."/>
            <person name="Lapidus A."/>
            <person name="Glavina del Rio T."/>
            <person name="Tice H."/>
            <person name="Bruce D."/>
            <person name="Goodwin L."/>
            <person name="Pitluck S."/>
            <person name="Chertkov O."/>
            <person name="Brettin T."/>
            <person name="Detter J.C."/>
            <person name="Han C."/>
            <person name="Larimer F."/>
            <person name="Land M."/>
            <person name="Hauser L."/>
            <person name="Kyrpides N."/>
            <person name="Mikhailova N."/>
            <person name="Spring S."/>
            <person name="Beller H."/>
        </authorList>
    </citation>
    <scope>NUCLEOTIDE SEQUENCE [LARGE SCALE GENOMIC DNA]</scope>
    <source>
        <strain>DSM 9187 / NBRC 110442 / TA 4</strain>
    </source>
</reference>
<keyword id="KW-0963">Cytoplasm</keyword>
<keyword id="KW-0238">DNA-binding</keyword>
<keyword id="KW-1185">Reference proteome</keyword>
<keyword id="KW-0804">Transcription</keyword>
<keyword id="KW-0805">Transcription regulation</keyword>
<evidence type="ECO:0000255" key="1">
    <source>
        <dbReference type="HAMAP-Rule" id="MF_00693"/>
    </source>
</evidence>
<evidence type="ECO:0000256" key="2">
    <source>
        <dbReference type="SAM" id="MobiDB-lite"/>
    </source>
</evidence>
<comment type="subcellular location">
    <subcellularLocation>
        <location evidence="1">Cytoplasm</location>
    </subcellularLocation>
</comment>
<comment type="similarity">
    <text evidence="1">Belongs to the TACO1 family.</text>
</comment>